<dbReference type="EMBL" id="CP000102">
    <property type="protein sequence ID" value="ABC57291.1"/>
    <property type="molecule type" value="Genomic_DNA"/>
</dbReference>
<dbReference type="RefSeq" id="WP_011406490.1">
    <property type="nucleotide sequence ID" value="NC_007681.1"/>
</dbReference>
<dbReference type="SMR" id="Q2NFW2"/>
<dbReference type="STRING" id="339860.Msp_0903"/>
<dbReference type="KEGG" id="mst:Msp_0903"/>
<dbReference type="eggNOG" id="arCOG04097">
    <property type="taxonomic scope" value="Archaea"/>
</dbReference>
<dbReference type="HOGENOM" id="CLU_058591_1_1_2"/>
<dbReference type="OrthoDB" id="9126at2157"/>
<dbReference type="Proteomes" id="UP000001931">
    <property type="component" value="Chromosome"/>
</dbReference>
<dbReference type="GO" id="GO:0022627">
    <property type="term" value="C:cytosolic small ribosomal subunit"/>
    <property type="evidence" value="ECO:0007669"/>
    <property type="project" value="TreeGrafter"/>
</dbReference>
<dbReference type="GO" id="GO:0019843">
    <property type="term" value="F:rRNA binding"/>
    <property type="evidence" value="ECO:0007669"/>
    <property type="project" value="UniProtKB-UniRule"/>
</dbReference>
<dbReference type="GO" id="GO:0003735">
    <property type="term" value="F:structural constituent of ribosome"/>
    <property type="evidence" value="ECO:0007669"/>
    <property type="project" value="InterPro"/>
</dbReference>
<dbReference type="GO" id="GO:0006412">
    <property type="term" value="P:translation"/>
    <property type="evidence" value="ECO:0007669"/>
    <property type="project" value="UniProtKB-UniRule"/>
</dbReference>
<dbReference type="CDD" id="cd02411">
    <property type="entry name" value="KH-II_30S_S3_arch"/>
    <property type="match status" value="1"/>
</dbReference>
<dbReference type="FunFam" id="3.30.300.20:FF:000001">
    <property type="entry name" value="30S ribosomal protein S3"/>
    <property type="match status" value="1"/>
</dbReference>
<dbReference type="Gene3D" id="3.30.300.20">
    <property type="match status" value="1"/>
</dbReference>
<dbReference type="Gene3D" id="3.30.1140.32">
    <property type="entry name" value="Ribosomal protein S3, C-terminal domain"/>
    <property type="match status" value="1"/>
</dbReference>
<dbReference type="HAMAP" id="MF_01309_A">
    <property type="entry name" value="Ribosomal_uS3_A"/>
    <property type="match status" value="1"/>
</dbReference>
<dbReference type="InterPro" id="IPR004087">
    <property type="entry name" value="KH_dom"/>
</dbReference>
<dbReference type="InterPro" id="IPR015946">
    <property type="entry name" value="KH_dom-like_a/b"/>
</dbReference>
<dbReference type="InterPro" id="IPR004044">
    <property type="entry name" value="KH_dom_type_2"/>
</dbReference>
<dbReference type="InterPro" id="IPR009019">
    <property type="entry name" value="KH_sf_prok-type"/>
</dbReference>
<dbReference type="InterPro" id="IPR036419">
    <property type="entry name" value="Ribosomal_S3_C_sf"/>
</dbReference>
<dbReference type="InterPro" id="IPR027488">
    <property type="entry name" value="Ribosomal_uS3_arc"/>
</dbReference>
<dbReference type="InterPro" id="IPR001351">
    <property type="entry name" value="Ribosomal_uS3_C"/>
</dbReference>
<dbReference type="InterPro" id="IPR005703">
    <property type="entry name" value="Ribosomal_uS3_euk/arc"/>
</dbReference>
<dbReference type="NCBIfam" id="NF003219">
    <property type="entry name" value="PRK04191.1"/>
    <property type="match status" value="1"/>
</dbReference>
<dbReference type="NCBIfam" id="TIGR01008">
    <property type="entry name" value="uS3_euk_arch"/>
    <property type="match status" value="1"/>
</dbReference>
<dbReference type="PANTHER" id="PTHR11760">
    <property type="entry name" value="30S/40S RIBOSOMAL PROTEIN S3"/>
    <property type="match status" value="1"/>
</dbReference>
<dbReference type="PANTHER" id="PTHR11760:SF32">
    <property type="entry name" value="SMALL RIBOSOMAL SUBUNIT PROTEIN US3"/>
    <property type="match status" value="1"/>
</dbReference>
<dbReference type="Pfam" id="PF07650">
    <property type="entry name" value="KH_2"/>
    <property type="match status" value="1"/>
</dbReference>
<dbReference type="Pfam" id="PF00189">
    <property type="entry name" value="Ribosomal_S3_C"/>
    <property type="match status" value="1"/>
</dbReference>
<dbReference type="SMART" id="SM00322">
    <property type="entry name" value="KH"/>
    <property type="match status" value="1"/>
</dbReference>
<dbReference type="SUPFAM" id="SSF54814">
    <property type="entry name" value="Prokaryotic type KH domain (KH-domain type II)"/>
    <property type="match status" value="1"/>
</dbReference>
<dbReference type="SUPFAM" id="SSF54821">
    <property type="entry name" value="Ribosomal protein S3 C-terminal domain"/>
    <property type="match status" value="1"/>
</dbReference>
<dbReference type="PROSITE" id="PS50823">
    <property type="entry name" value="KH_TYPE_2"/>
    <property type="match status" value="1"/>
</dbReference>
<name>RS3_METST</name>
<comment type="function">
    <text evidence="1">Binds the lower part of the 30S subunit head.</text>
</comment>
<comment type="subunit">
    <text evidence="1">Part of the 30S ribosomal subunit.</text>
</comment>
<comment type="similarity">
    <text evidence="1">Belongs to the universal ribosomal protein uS3 family.</text>
</comment>
<evidence type="ECO:0000255" key="1">
    <source>
        <dbReference type="HAMAP-Rule" id="MF_01309"/>
    </source>
</evidence>
<evidence type="ECO:0000256" key="2">
    <source>
        <dbReference type="SAM" id="MobiDB-lite"/>
    </source>
</evidence>
<evidence type="ECO:0000305" key="3"/>
<sequence length="252" mass="28213">MIEKDFVKEGLKRTRIDEYLETKLERAGYGGMDIQVTPVGTMVIVYAEKPGMVIGRGGKTVRAITKTLKNNFDLENPQVEVKEVDVPELNPRIMAHKVVAMLQRGMQFRRVAYSIIRRIMSAGAQGVEVTISGKIRGSRSACAKFNEGYIKKCGEPSIKYVKEGFATVQLKPGVLGIYVRIMPPEVTLPDNIEISEPEIVDVEEPVAQEVPEVQESEIVEEITGEDILEELSEESEIEEITEEIEDVETLEE</sequence>
<reference key="1">
    <citation type="journal article" date="2006" name="J. Bacteriol.">
        <title>The genome sequence of Methanosphaera stadtmanae reveals why this human intestinal archaeon is restricted to methanol and H2 for methane formation and ATP synthesis.</title>
        <authorList>
            <person name="Fricke W.F."/>
            <person name="Seedorf H."/>
            <person name="Henne A."/>
            <person name="Kruer M."/>
            <person name="Liesegang H."/>
            <person name="Hedderich R."/>
            <person name="Gottschalk G."/>
            <person name="Thauer R.K."/>
        </authorList>
    </citation>
    <scope>NUCLEOTIDE SEQUENCE [LARGE SCALE GENOMIC DNA]</scope>
    <source>
        <strain>ATCC 43021 / DSM 3091 / JCM 11832 / MCB-3</strain>
    </source>
</reference>
<gene>
    <name evidence="1" type="primary">rps3</name>
    <name type="ordered locus">Msp_0903</name>
</gene>
<keyword id="KW-1185">Reference proteome</keyword>
<keyword id="KW-0687">Ribonucleoprotein</keyword>
<keyword id="KW-0689">Ribosomal protein</keyword>
<keyword id="KW-0694">RNA-binding</keyword>
<keyword id="KW-0699">rRNA-binding</keyword>
<accession>Q2NFW2</accession>
<protein>
    <recommendedName>
        <fullName evidence="1">Small ribosomal subunit protein uS3</fullName>
    </recommendedName>
    <alternativeName>
        <fullName evidence="3">30S ribosomal protein S3</fullName>
    </alternativeName>
</protein>
<feature type="chain" id="PRO_0000293926" description="Small ribosomal subunit protein uS3">
    <location>
        <begin position="1"/>
        <end position="252"/>
    </location>
</feature>
<feature type="domain" description="KH type-2" evidence="1">
    <location>
        <begin position="16"/>
        <end position="85"/>
    </location>
</feature>
<feature type="region of interest" description="Disordered" evidence="2">
    <location>
        <begin position="233"/>
        <end position="252"/>
    </location>
</feature>
<proteinExistence type="inferred from homology"/>
<organism>
    <name type="scientific">Methanosphaera stadtmanae (strain ATCC 43021 / DSM 3091 / JCM 11832 / MCB-3)</name>
    <dbReference type="NCBI Taxonomy" id="339860"/>
    <lineage>
        <taxon>Archaea</taxon>
        <taxon>Methanobacteriati</taxon>
        <taxon>Methanobacteriota</taxon>
        <taxon>Methanomada group</taxon>
        <taxon>Methanobacteria</taxon>
        <taxon>Methanobacteriales</taxon>
        <taxon>Methanobacteriaceae</taxon>
        <taxon>Methanosphaera</taxon>
    </lineage>
</organism>